<proteinExistence type="inferred from homology"/>
<dbReference type="EMBL" id="CP000800">
    <property type="protein sequence ID" value="ABV17949.1"/>
    <property type="molecule type" value="Genomic_DNA"/>
</dbReference>
<dbReference type="RefSeq" id="WP_000272188.1">
    <property type="nucleotide sequence ID" value="NC_009801.1"/>
</dbReference>
<dbReference type="SMR" id="A7ZHQ5"/>
<dbReference type="KEGG" id="ecw:EcE24377A_0168"/>
<dbReference type="HOGENOM" id="CLU_136774_0_0_6"/>
<dbReference type="Proteomes" id="UP000001122">
    <property type="component" value="Chromosome"/>
</dbReference>
<dbReference type="HAMAP" id="MF_01519">
    <property type="entry name" value="UPF0325"/>
    <property type="match status" value="1"/>
</dbReference>
<dbReference type="InterPro" id="IPR020911">
    <property type="entry name" value="UPF0325"/>
</dbReference>
<dbReference type="NCBIfam" id="NF010213">
    <property type="entry name" value="PRK13677.1"/>
    <property type="match status" value="1"/>
</dbReference>
<dbReference type="Pfam" id="PF11944">
    <property type="entry name" value="DUF3461"/>
    <property type="match status" value="1"/>
</dbReference>
<protein>
    <recommendedName>
        <fullName evidence="1">UPF0325 protein YaeH</fullName>
    </recommendedName>
</protein>
<reference key="1">
    <citation type="journal article" date="2008" name="J. Bacteriol.">
        <title>The pangenome structure of Escherichia coli: comparative genomic analysis of E. coli commensal and pathogenic isolates.</title>
        <authorList>
            <person name="Rasko D.A."/>
            <person name="Rosovitz M.J."/>
            <person name="Myers G.S.A."/>
            <person name="Mongodin E.F."/>
            <person name="Fricke W.F."/>
            <person name="Gajer P."/>
            <person name="Crabtree J."/>
            <person name="Sebaihia M."/>
            <person name="Thomson N.R."/>
            <person name="Chaudhuri R."/>
            <person name="Henderson I.R."/>
            <person name="Sperandio V."/>
            <person name="Ravel J."/>
        </authorList>
    </citation>
    <scope>NUCLEOTIDE SEQUENCE [LARGE SCALE GENOMIC DNA]</scope>
    <source>
        <strain>E24377A / ETEC</strain>
    </source>
</reference>
<gene>
    <name evidence="1" type="primary">yaeH</name>
    <name type="ordered locus">EcE24377A_0168</name>
</gene>
<keyword id="KW-1185">Reference proteome</keyword>
<evidence type="ECO:0000255" key="1">
    <source>
        <dbReference type="HAMAP-Rule" id="MF_01519"/>
    </source>
</evidence>
<comment type="similarity">
    <text evidence="1">Belongs to the UPF0325 family.</text>
</comment>
<sequence>MYDNLKSLGITNPEEIDRYSLRQEANNDILKIYFQKDKGEFFAKSVKFKYPRQRKTVVADGVGQGYKEVQEISPNLRYIIDELDQICQRDRSEVDLKRKILDDLRHLESVVTNKISEIEADLEKLTRK</sequence>
<organism>
    <name type="scientific">Escherichia coli O139:H28 (strain E24377A / ETEC)</name>
    <dbReference type="NCBI Taxonomy" id="331111"/>
    <lineage>
        <taxon>Bacteria</taxon>
        <taxon>Pseudomonadati</taxon>
        <taxon>Pseudomonadota</taxon>
        <taxon>Gammaproteobacteria</taxon>
        <taxon>Enterobacterales</taxon>
        <taxon>Enterobacteriaceae</taxon>
        <taxon>Escherichia</taxon>
    </lineage>
</organism>
<accession>A7ZHQ5</accession>
<name>YAEH_ECO24</name>
<feature type="chain" id="PRO_1000068616" description="UPF0325 protein YaeH">
    <location>
        <begin position="1"/>
        <end position="128"/>
    </location>
</feature>